<keyword id="KW-0150">Chloroplast</keyword>
<keyword id="KW-0934">Plastid</keyword>
<keyword id="KW-0687">Ribonucleoprotein</keyword>
<keyword id="KW-0689">Ribosomal protein</keyword>
<comment type="subcellular location">
    <subcellularLocation>
        <location>Plastid</location>
        <location>Chloroplast</location>
    </subcellularLocation>
</comment>
<comment type="similarity">
    <text evidence="1">Belongs to the bacterial ribosomal protein bL33 family.</text>
</comment>
<sequence length="64" mass="7593">MAKAKDVRITISLECTGCSQGNKKYPGVFRYTTQKNRRNTPTRIELKKFCPYCYRRTICREIKK</sequence>
<feature type="chain" id="PRO_0000170284" description="Large ribosomal subunit protein bL33c">
    <location>
        <begin position="1"/>
        <end position="64"/>
    </location>
</feature>
<geneLocation type="chloroplast"/>
<accession>Q5SD36</accession>
<gene>
    <name evidence="1" type="primary">rpl33</name>
</gene>
<organism>
    <name type="scientific">Huperzia lucidula</name>
    <name type="common">Shining clubmoss</name>
    <name type="synonym">Lycopodium lucidulum</name>
    <dbReference type="NCBI Taxonomy" id="37429"/>
    <lineage>
        <taxon>Eukaryota</taxon>
        <taxon>Viridiplantae</taxon>
        <taxon>Streptophyta</taxon>
        <taxon>Embryophyta</taxon>
        <taxon>Tracheophyta</taxon>
        <taxon>Lycopodiopsida</taxon>
        <taxon>Lycopodiales</taxon>
        <taxon>Lycopodiaceae</taxon>
        <taxon>Huperzioideae</taxon>
        <taxon>Huperzia</taxon>
    </lineage>
</organism>
<name>RK33_HUPLU</name>
<reference key="1">
    <citation type="journal article" date="2005" name="Gene">
        <title>The first complete chloroplast genome sequence of a lycophyte, Huperzia lucidula (Lycopodiaceae).</title>
        <authorList>
            <person name="Wolf P.G."/>
            <person name="Karol K.G."/>
            <person name="Mandoli D.F."/>
            <person name="Kuehl J.V."/>
            <person name="Arumuganathan K."/>
            <person name="Ellis M.W."/>
            <person name="Mishler B.D."/>
            <person name="Kelch D.G."/>
            <person name="Olmstead R.G."/>
            <person name="Boore J.L."/>
        </authorList>
    </citation>
    <scope>NUCLEOTIDE SEQUENCE [LARGE SCALE GENOMIC DNA]</scope>
</reference>
<protein>
    <recommendedName>
        <fullName evidence="1">Large ribosomal subunit protein bL33c</fullName>
    </recommendedName>
    <alternativeName>
        <fullName evidence="2">50S ribosomal protein L33, chloroplastic</fullName>
    </alternativeName>
</protein>
<dbReference type="EMBL" id="AY660566">
    <property type="protein sequence ID" value="AAT80704.1"/>
    <property type="molecule type" value="Genomic_DNA"/>
</dbReference>
<dbReference type="RefSeq" id="YP_209508.1">
    <property type="nucleotide sequence ID" value="NC_006861.1"/>
</dbReference>
<dbReference type="GeneID" id="3283762"/>
<dbReference type="GO" id="GO:0009507">
    <property type="term" value="C:chloroplast"/>
    <property type="evidence" value="ECO:0007669"/>
    <property type="project" value="UniProtKB-SubCell"/>
</dbReference>
<dbReference type="GO" id="GO:1990904">
    <property type="term" value="C:ribonucleoprotein complex"/>
    <property type="evidence" value="ECO:0007669"/>
    <property type="project" value="UniProtKB-KW"/>
</dbReference>
<dbReference type="GO" id="GO:0005840">
    <property type="term" value="C:ribosome"/>
    <property type="evidence" value="ECO:0007669"/>
    <property type="project" value="UniProtKB-KW"/>
</dbReference>
<dbReference type="GO" id="GO:0003735">
    <property type="term" value="F:structural constituent of ribosome"/>
    <property type="evidence" value="ECO:0007669"/>
    <property type="project" value="InterPro"/>
</dbReference>
<dbReference type="GO" id="GO:0006412">
    <property type="term" value="P:translation"/>
    <property type="evidence" value="ECO:0007669"/>
    <property type="project" value="UniProtKB-UniRule"/>
</dbReference>
<dbReference type="Gene3D" id="2.20.28.120">
    <property type="entry name" value="Ribosomal protein L33"/>
    <property type="match status" value="1"/>
</dbReference>
<dbReference type="HAMAP" id="MF_00294">
    <property type="entry name" value="Ribosomal_bL33"/>
    <property type="match status" value="1"/>
</dbReference>
<dbReference type="InterPro" id="IPR001705">
    <property type="entry name" value="Ribosomal_bL33"/>
</dbReference>
<dbReference type="InterPro" id="IPR018264">
    <property type="entry name" value="Ribosomal_bL33_CS"/>
</dbReference>
<dbReference type="InterPro" id="IPR038584">
    <property type="entry name" value="Ribosomal_bL33_sf"/>
</dbReference>
<dbReference type="InterPro" id="IPR011332">
    <property type="entry name" value="Ribosomal_zn-bd"/>
</dbReference>
<dbReference type="NCBIfam" id="NF001764">
    <property type="entry name" value="PRK00504.1"/>
    <property type="match status" value="1"/>
</dbReference>
<dbReference type="NCBIfam" id="NF001860">
    <property type="entry name" value="PRK00595.1"/>
    <property type="match status" value="1"/>
</dbReference>
<dbReference type="NCBIfam" id="TIGR01023">
    <property type="entry name" value="rpmG_bact"/>
    <property type="match status" value="1"/>
</dbReference>
<dbReference type="PANTHER" id="PTHR43168">
    <property type="entry name" value="50S RIBOSOMAL PROTEIN L33, CHLOROPLASTIC"/>
    <property type="match status" value="1"/>
</dbReference>
<dbReference type="PANTHER" id="PTHR43168:SF2">
    <property type="entry name" value="LARGE RIBOSOMAL SUBUNIT PROTEIN BL33C"/>
    <property type="match status" value="1"/>
</dbReference>
<dbReference type="Pfam" id="PF00471">
    <property type="entry name" value="Ribosomal_L33"/>
    <property type="match status" value="1"/>
</dbReference>
<dbReference type="SUPFAM" id="SSF57829">
    <property type="entry name" value="Zn-binding ribosomal proteins"/>
    <property type="match status" value="1"/>
</dbReference>
<dbReference type="PROSITE" id="PS00582">
    <property type="entry name" value="RIBOSOMAL_L33"/>
    <property type="match status" value="1"/>
</dbReference>
<evidence type="ECO:0000255" key="1">
    <source>
        <dbReference type="HAMAP-Rule" id="MF_00294"/>
    </source>
</evidence>
<evidence type="ECO:0000305" key="2"/>
<proteinExistence type="inferred from homology"/>